<proteinExistence type="inferred from homology"/>
<sequence>MIDPKLLRNNIEVVNAGLAKRGVQLDVQEWASLETRRKDLQSKTEKLQAERNAGAKQVGQIKKSGGDASEIMARMQAIGDEIKAAEVALSELQNEIEQKALSIPNLPDESVPAGKDENDNVEISKWGTPRQFDFEIKDHTDLGEWMGGLEFETATKLTGSRFSVLKGPLARLQRALTQFMLDTHTLKNGYTEAYVPYLVNADSLRGTGQLPKFEEDLFKLQGEKEYYLIPTAEVPVTNFVRDEIIDADRLPLKYAAHTPCFRSEAGSYGRDTRGLIRQHQFDKVEMVQIVKPETSMQALEELTAHAEGILQALGLPYRKILLCGGDMGFGATKTYDLEVWVPSQNTYREISSCSNMGDFQARRMKARYRMDQKKTELVHTLNGSGLAVGRTLLAVMENYQREDGSIEIPEVLRPYMGGATFID</sequence>
<protein>
    <recommendedName>
        <fullName evidence="1">Serine--tRNA ligase</fullName>
        <ecNumber evidence="1">6.1.1.11</ecNumber>
    </recommendedName>
    <alternativeName>
        <fullName evidence="1">Seryl-tRNA synthetase</fullName>
        <shortName evidence="1">SerRS</shortName>
    </alternativeName>
    <alternativeName>
        <fullName evidence="1">Seryl-tRNA(Ser/Sec) synthetase</fullName>
    </alternativeName>
</protein>
<name>SYS_ACIB3</name>
<gene>
    <name evidence="1" type="primary">serS</name>
    <name type="ordered locus">ABBFA_000741</name>
</gene>
<accession>B7GXI2</accession>
<organism>
    <name type="scientific">Acinetobacter baumannii (strain AB307-0294)</name>
    <dbReference type="NCBI Taxonomy" id="557600"/>
    <lineage>
        <taxon>Bacteria</taxon>
        <taxon>Pseudomonadati</taxon>
        <taxon>Pseudomonadota</taxon>
        <taxon>Gammaproteobacteria</taxon>
        <taxon>Moraxellales</taxon>
        <taxon>Moraxellaceae</taxon>
        <taxon>Acinetobacter</taxon>
        <taxon>Acinetobacter calcoaceticus/baumannii complex</taxon>
    </lineage>
</organism>
<reference key="1">
    <citation type="journal article" date="2008" name="J. Bacteriol.">
        <title>Comparative genome sequence analysis of multidrug-resistant Acinetobacter baumannii.</title>
        <authorList>
            <person name="Adams M.D."/>
            <person name="Goglin K."/>
            <person name="Molyneaux N."/>
            <person name="Hujer K.M."/>
            <person name="Lavender H."/>
            <person name="Jamison J.J."/>
            <person name="MacDonald I.J."/>
            <person name="Martin K.M."/>
            <person name="Russo T."/>
            <person name="Campagnari A.A."/>
            <person name="Hujer A.M."/>
            <person name="Bonomo R.A."/>
            <person name="Gill S.R."/>
        </authorList>
    </citation>
    <scope>NUCLEOTIDE SEQUENCE [LARGE SCALE GENOMIC DNA]</scope>
    <source>
        <strain>AB307-0294</strain>
    </source>
</reference>
<comment type="function">
    <text evidence="1">Catalyzes the attachment of serine to tRNA(Ser). Is also able to aminoacylate tRNA(Sec) with serine, to form the misacylated tRNA L-seryl-tRNA(Sec), which will be further converted into selenocysteinyl-tRNA(Sec).</text>
</comment>
<comment type="catalytic activity">
    <reaction evidence="1">
        <text>tRNA(Ser) + L-serine + ATP = L-seryl-tRNA(Ser) + AMP + diphosphate + H(+)</text>
        <dbReference type="Rhea" id="RHEA:12292"/>
        <dbReference type="Rhea" id="RHEA-COMP:9669"/>
        <dbReference type="Rhea" id="RHEA-COMP:9703"/>
        <dbReference type="ChEBI" id="CHEBI:15378"/>
        <dbReference type="ChEBI" id="CHEBI:30616"/>
        <dbReference type="ChEBI" id="CHEBI:33019"/>
        <dbReference type="ChEBI" id="CHEBI:33384"/>
        <dbReference type="ChEBI" id="CHEBI:78442"/>
        <dbReference type="ChEBI" id="CHEBI:78533"/>
        <dbReference type="ChEBI" id="CHEBI:456215"/>
        <dbReference type="EC" id="6.1.1.11"/>
    </reaction>
</comment>
<comment type="catalytic activity">
    <reaction evidence="1">
        <text>tRNA(Sec) + L-serine + ATP = L-seryl-tRNA(Sec) + AMP + diphosphate + H(+)</text>
        <dbReference type="Rhea" id="RHEA:42580"/>
        <dbReference type="Rhea" id="RHEA-COMP:9742"/>
        <dbReference type="Rhea" id="RHEA-COMP:10128"/>
        <dbReference type="ChEBI" id="CHEBI:15378"/>
        <dbReference type="ChEBI" id="CHEBI:30616"/>
        <dbReference type="ChEBI" id="CHEBI:33019"/>
        <dbReference type="ChEBI" id="CHEBI:33384"/>
        <dbReference type="ChEBI" id="CHEBI:78442"/>
        <dbReference type="ChEBI" id="CHEBI:78533"/>
        <dbReference type="ChEBI" id="CHEBI:456215"/>
        <dbReference type="EC" id="6.1.1.11"/>
    </reaction>
</comment>
<comment type="pathway">
    <text evidence="1">Aminoacyl-tRNA biosynthesis; selenocysteinyl-tRNA(Sec) biosynthesis; L-seryl-tRNA(Sec) from L-serine and tRNA(Sec): step 1/1.</text>
</comment>
<comment type="subunit">
    <text evidence="1">Homodimer. The tRNA molecule binds across the dimer.</text>
</comment>
<comment type="subcellular location">
    <subcellularLocation>
        <location evidence="1">Cytoplasm</location>
    </subcellularLocation>
</comment>
<comment type="domain">
    <text evidence="1">Consists of two distinct domains, a catalytic core and a N-terminal extension that is involved in tRNA binding.</text>
</comment>
<comment type="similarity">
    <text evidence="1">Belongs to the class-II aminoacyl-tRNA synthetase family. Type-1 seryl-tRNA synthetase subfamily.</text>
</comment>
<dbReference type="EC" id="6.1.1.11" evidence="1"/>
<dbReference type="EMBL" id="CP001172">
    <property type="protein sequence ID" value="ACJ57922.1"/>
    <property type="molecule type" value="Genomic_DNA"/>
</dbReference>
<dbReference type="RefSeq" id="WP_000566842.1">
    <property type="nucleotide sequence ID" value="NZ_CP001172.1"/>
</dbReference>
<dbReference type="SMR" id="B7GXI2"/>
<dbReference type="HOGENOM" id="CLU_023797_1_1_6"/>
<dbReference type="UniPathway" id="UPA00906">
    <property type="reaction ID" value="UER00895"/>
</dbReference>
<dbReference type="Proteomes" id="UP000006924">
    <property type="component" value="Chromosome"/>
</dbReference>
<dbReference type="GO" id="GO:0005737">
    <property type="term" value="C:cytoplasm"/>
    <property type="evidence" value="ECO:0007669"/>
    <property type="project" value="UniProtKB-SubCell"/>
</dbReference>
<dbReference type="GO" id="GO:0005524">
    <property type="term" value="F:ATP binding"/>
    <property type="evidence" value="ECO:0007669"/>
    <property type="project" value="UniProtKB-UniRule"/>
</dbReference>
<dbReference type="GO" id="GO:0004828">
    <property type="term" value="F:serine-tRNA ligase activity"/>
    <property type="evidence" value="ECO:0007669"/>
    <property type="project" value="UniProtKB-UniRule"/>
</dbReference>
<dbReference type="GO" id="GO:0016260">
    <property type="term" value="P:selenocysteine biosynthetic process"/>
    <property type="evidence" value="ECO:0007669"/>
    <property type="project" value="UniProtKB-UniRule"/>
</dbReference>
<dbReference type="GO" id="GO:0006434">
    <property type="term" value="P:seryl-tRNA aminoacylation"/>
    <property type="evidence" value="ECO:0007669"/>
    <property type="project" value="UniProtKB-UniRule"/>
</dbReference>
<dbReference type="CDD" id="cd00770">
    <property type="entry name" value="SerRS_core"/>
    <property type="match status" value="1"/>
</dbReference>
<dbReference type="Gene3D" id="3.30.930.10">
    <property type="entry name" value="Bira Bifunctional Protein, Domain 2"/>
    <property type="match status" value="1"/>
</dbReference>
<dbReference type="Gene3D" id="1.10.287.40">
    <property type="entry name" value="Serine-tRNA synthetase, tRNA binding domain"/>
    <property type="match status" value="1"/>
</dbReference>
<dbReference type="HAMAP" id="MF_00176">
    <property type="entry name" value="Ser_tRNA_synth_type1"/>
    <property type="match status" value="1"/>
</dbReference>
<dbReference type="InterPro" id="IPR002314">
    <property type="entry name" value="aa-tRNA-synt_IIb"/>
</dbReference>
<dbReference type="InterPro" id="IPR006195">
    <property type="entry name" value="aa-tRNA-synth_II"/>
</dbReference>
<dbReference type="InterPro" id="IPR045864">
    <property type="entry name" value="aa-tRNA-synth_II/BPL/LPL"/>
</dbReference>
<dbReference type="InterPro" id="IPR002317">
    <property type="entry name" value="Ser-tRNA-ligase_type_1"/>
</dbReference>
<dbReference type="InterPro" id="IPR015866">
    <property type="entry name" value="Ser-tRNA-synth_1_N"/>
</dbReference>
<dbReference type="InterPro" id="IPR042103">
    <property type="entry name" value="SerRS_1_N_sf"/>
</dbReference>
<dbReference type="InterPro" id="IPR033729">
    <property type="entry name" value="SerRS_core"/>
</dbReference>
<dbReference type="InterPro" id="IPR010978">
    <property type="entry name" value="tRNA-bd_arm"/>
</dbReference>
<dbReference type="NCBIfam" id="TIGR00414">
    <property type="entry name" value="serS"/>
    <property type="match status" value="1"/>
</dbReference>
<dbReference type="PANTHER" id="PTHR43697:SF1">
    <property type="entry name" value="SERINE--TRNA LIGASE"/>
    <property type="match status" value="1"/>
</dbReference>
<dbReference type="PANTHER" id="PTHR43697">
    <property type="entry name" value="SERYL-TRNA SYNTHETASE"/>
    <property type="match status" value="1"/>
</dbReference>
<dbReference type="Pfam" id="PF02403">
    <property type="entry name" value="Seryl_tRNA_N"/>
    <property type="match status" value="1"/>
</dbReference>
<dbReference type="Pfam" id="PF00587">
    <property type="entry name" value="tRNA-synt_2b"/>
    <property type="match status" value="1"/>
</dbReference>
<dbReference type="PIRSF" id="PIRSF001529">
    <property type="entry name" value="Ser-tRNA-synth_IIa"/>
    <property type="match status" value="1"/>
</dbReference>
<dbReference type="PRINTS" id="PR00981">
    <property type="entry name" value="TRNASYNTHSER"/>
</dbReference>
<dbReference type="SUPFAM" id="SSF55681">
    <property type="entry name" value="Class II aaRS and biotin synthetases"/>
    <property type="match status" value="1"/>
</dbReference>
<dbReference type="SUPFAM" id="SSF46589">
    <property type="entry name" value="tRNA-binding arm"/>
    <property type="match status" value="1"/>
</dbReference>
<dbReference type="PROSITE" id="PS50862">
    <property type="entry name" value="AA_TRNA_LIGASE_II"/>
    <property type="match status" value="1"/>
</dbReference>
<feature type="chain" id="PRO_1000199462" description="Serine--tRNA ligase">
    <location>
        <begin position="1"/>
        <end position="423"/>
    </location>
</feature>
<feature type="binding site" evidence="1">
    <location>
        <begin position="231"/>
        <end position="233"/>
    </location>
    <ligand>
        <name>L-serine</name>
        <dbReference type="ChEBI" id="CHEBI:33384"/>
    </ligand>
</feature>
<feature type="binding site" evidence="1">
    <location>
        <begin position="262"/>
        <end position="264"/>
    </location>
    <ligand>
        <name>ATP</name>
        <dbReference type="ChEBI" id="CHEBI:30616"/>
    </ligand>
</feature>
<feature type="binding site" evidence="1">
    <location>
        <position position="285"/>
    </location>
    <ligand>
        <name>L-serine</name>
        <dbReference type="ChEBI" id="CHEBI:33384"/>
    </ligand>
</feature>
<feature type="binding site" evidence="1">
    <location>
        <begin position="349"/>
        <end position="352"/>
    </location>
    <ligand>
        <name>ATP</name>
        <dbReference type="ChEBI" id="CHEBI:30616"/>
    </ligand>
</feature>
<feature type="binding site" evidence="1">
    <location>
        <position position="384"/>
    </location>
    <ligand>
        <name>L-serine</name>
        <dbReference type="ChEBI" id="CHEBI:33384"/>
    </ligand>
</feature>
<evidence type="ECO:0000255" key="1">
    <source>
        <dbReference type="HAMAP-Rule" id="MF_00176"/>
    </source>
</evidence>
<keyword id="KW-0030">Aminoacyl-tRNA synthetase</keyword>
<keyword id="KW-0067">ATP-binding</keyword>
<keyword id="KW-0963">Cytoplasm</keyword>
<keyword id="KW-0436">Ligase</keyword>
<keyword id="KW-0547">Nucleotide-binding</keyword>
<keyword id="KW-0648">Protein biosynthesis</keyword>